<comment type="function">
    <text>Cytochromes P450 are a group of heme-thiolate monooxygenases. They oxidize a variety of structurally unrelated compounds, including steroids, fatty acids, and xenobiotics.</text>
</comment>
<comment type="catalytic activity">
    <reaction>
        <text>an organic molecule + reduced [NADPH--hemoprotein reductase] + O2 = an alcohol + oxidized [NADPH--hemoprotein reductase] + H2O + H(+)</text>
        <dbReference type="Rhea" id="RHEA:17149"/>
        <dbReference type="Rhea" id="RHEA-COMP:11964"/>
        <dbReference type="Rhea" id="RHEA-COMP:11965"/>
        <dbReference type="ChEBI" id="CHEBI:15377"/>
        <dbReference type="ChEBI" id="CHEBI:15378"/>
        <dbReference type="ChEBI" id="CHEBI:15379"/>
        <dbReference type="ChEBI" id="CHEBI:30879"/>
        <dbReference type="ChEBI" id="CHEBI:57618"/>
        <dbReference type="ChEBI" id="CHEBI:58210"/>
        <dbReference type="ChEBI" id="CHEBI:142491"/>
        <dbReference type="EC" id="1.14.14.1"/>
    </reaction>
</comment>
<comment type="cofactor">
    <cofactor evidence="1">
        <name>heme</name>
        <dbReference type="ChEBI" id="CHEBI:30413"/>
    </cofactor>
</comment>
<comment type="subcellular location">
    <subcellularLocation>
        <location>Endoplasmic reticulum membrane</location>
        <topology>Peripheral membrane protein</topology>
    </subcellularLocation>
    <subcellularLocation>
        <location>Microsome membrane</location>
        <topology>Peripheral membrane protein</topology>
    </subcellularLocation>
</comment>
<comment type="induction">
    <text>By 3-methylcholanthrene (3MC) and isosafrole (ISF).</text>
</comment>
<comment type="similarity">
    <text evidence="2">Belongs to the cytochrome P450 family.</text>
</comment>
<dbReference type="EC" id="1.14.14.1"/>
<dbReference type="EMBL" id="X73631">
    <property type="protein sequence ID" value="CAA52010.1"/>
    <property type="molecule type" value="mRNA"/>
</dbReference>
<dbReference type="PIR" id="S34184">
    <property type="entry name" value="S34184"/>
</dbReference>
<dbReference type="SMR" id="Q92100"/>
<dbReference type="GO" id="GO:0005789">
    <property type="term" value="C:endoplasmic reticulum membrane"/>
    <property type="evidence" value="ECO:0007669"/>
    <property type="project" value="UniProtKB-SubCell"/>
</dbReference>
<dbReference type="GO" id="GO:0020037">
    <property type="term" value="F:heme binding"/>
    <property type="evidence" value="ECO:0007669"/>
    <property type="project" value="InterPro"/>
</dbReference>
<dbReference type="GO" id="GO:0005506">
    <property type="term" value="F:iron ion binding"/>
    <property type="evidence" value="ECO:0007669"/>
    <property type="project" value="InterPro"/>
</dbReference>
<dbReference type="GO" id="GO:0004508">
    <property type="term" value="F:steroid 17-alpha-monooxygenase activity"/>
    <property type="evidence" value="ECO:0007669"/>
    <property type="project" value="TreeGrafter"/>
</dbReference>
<dbReference type="GO" id="GO:0042446">
    <property type="term" value="P:hormone biosynthetic process"/>
    <property type="evidence" value="ECO:0007669"/>
    <property type="project" value="TreeGrafter"/>
</dbReference>
<dbReference type="GO" id="GO:0042448">
    <property type="term" value="P:progesterone metabolic process"/>
    <property type="evidence" value="ECO:0007669"/>
    <property type="project" value="TreeGrafter"/>
</dbReference>
<dbReference type="CDD" id="cd20676">
    <property type="entry name" value="CYP1A"/>
    <property type="match status" value="1"/>
</dbReference>
<dbReference type="FunFam" id="1.10.630.10:FF:000002">
    <property type="entry name" value="Cytochrome P450 1A1"/>
    <property type="match status" value="1"/>
</dbReference>
<dbReference type="Gene3D" id="1.10.630.10">
    <property type="entry name" value="Cytochrome P450"/>
    <property type="match status" value="1"/>
</dbReference>
<dbReference type="InterPro" id="IPR001128">
    <property type="entry name" value="Cyt_P450"/>
</dbReference>
<dbReference type="InterPro" id="IPR017972">
    <property type="entry name" value="Cyt_P450_CS"/>
</dbReference>
<dbReference type="InterPro" id="IPR002401">
    <property type="entry name" value="Cyt_P450_E_grp-I"/>
</dbReference>
<dbReference type="InterPro" id="IPR008066">
    <property type="entry name" value="Cyt_P450_E_grp-I_CYP1"/>
</dbReference>
<dbReference type="InterPro" id="IPR036396">
    <property type="entry name" value="Cyt_P450_sf"/>
</dbReference>
<dbReference type="PANTHER" id="PTHR24289:SF21">
    <property type="entry name" value="CYTOCHROME P450 1A"/>
    <property type="match status" value="1"/>
</dbReference>
<dbReference type="PANTHER" id="PTHR24289">
    <property type="entry name" value="STEROID 17-ALPHA-HYDROXYLASE/17,20 LYASE"/>
    <property type="match status" value="1"/>
</dbReference>
<dbReference type="Pfam" id="PF00067">
    <property type="entry name" value="p450"/>
    <property type="match status" value="1"/>
</dbReference>
<dbReference type="PRINTS" id="PR00463">
    <property type="entry name" value="EP450I"/>
</dbReference>
<dbReference type="PRINTS" id="PR01683">
    <property type="entry name" value="EP450ICYP1A"/>
</dbReference>
<dbReference type="PRINTS" id="PR00385">
    <property type="entry name" value="P450"/>
</dbReference>
<dbReference type="SUPFAM" id="SSF48264">
    <property type="entry name" value="Cytochrome P450"/>
    <property type="match status" value="1"/>
</dbReference>
<dbReference type="PROSITE" id="PS00086">
    <property type="entry name" value="CYTOCHROME_P450"/>
    <property type="match status" value="1"/>
</dbReference>
<accession>Q92100</accession>
<protein>
    <recommendedName>
        <fullName>Cytochrome P450 1A1</fullName>
        <ecNumber>1.14.14.1</ecNumber>
    </recommendedName>
    <alternativeName>
        <fullName>CYPIA1</fullName>
    </alternativeName>
</protein>
<name>CP1A1_PLEPL</name>
<reference key="1">
    <citation type="journal article" date="1993" name="Mol. Mar. Biol. Biotechnol.">
        <title>Cytochrome P450 1A1 cDNA from plaice (Pleuronectes platessa) and induction of P450 1A1 mRNA in various tissues by 3-methylcholanthrene and isosafrole.</title>
        <authorList>
            <person name="Leaver M.J."/>
            <person name="Pirrit L."/>
            <person name="George S.G."/>
        </authorList>
    </citation>
    <scope>NUCLEOTIDE SEQUENCE [MRNA]</scope>
    <source>
        <tissue>Liver</tissue>
    </source>
</reference>
<sequence>MMLMMLPFIGSVSVSESLVAMTTMCLVYLILKFFQTEIPEGLRRLPGPKPLPIIGNVLGLGSKPYLSLTAMSKRYGHVFQIQIGMRPVVVLSGTGTVRQALIKQGDEFAGRPDLYSFRFINAGKSLAFSTDQAGVWRARRKLAYSALRSFSTLEGTTPEYSCVLEEHICKEGEYLIKQLNTVMKADGSFDPFRHIVVSVANVICGMCFGRRYDHDDQELVSLVTLSDEFGRVVGSGNPADFIPILQYLPSAEMKNFLRINEHFTEFVQKIVTEHYTTFNKDNIRDITDSLIDHCEDRKLDENSNVQMSDEKIVGIVNDLFGAGFDTVSTALSWSVMYLVAHPEIQERLYQEIEDKVGLDRMPLLSDKPNLPFLEAFILEILRHSSFLPFTIPHCTTKDTSLNGYFIPKDTCVFINQWQINHDPELWKDPSSFNPDRFLSADGSEVNKLDGEKVMAFGMGKRRCIGEVIARNEVYLFLAIIIQKLHFLPIPGEKLDMTPEYGLTMKHKRCHLKATMRARNEH</sequence>
<evidence type="ECO:0000250" key="1"/>
<evidence type="ECO:0000305" key="2"/>
<organism>
    <name type="scientific">Pleuronectes platessa</name>
    <name type="common">European plaice</name>
    <dbReference type="NCBI Taxonomy" id="8262"/>
    <lineage>
        <taxon>Eukaryota</taxon>
        <taxon>Metazoa</taxon>
        <taxon>Chordata</taxon>
        <taxon>Craniata</taxon>
        <taxon>Vertebrata</taxon>
        <taxon>Euteleostomi</taxon>
        <taxon>Actinopterygii</taxon>
        <taxon>Neopterygii</taxon>
        <taxon>Teleostei</taxon>
        <taxon>Neoteleostei</taxon>
        <taxon>Acanthomorphata</taxon>
        <taxon>Carangaria</taxon>
        <taxon>Pleuronectiformes</taxon>
        <taxon>Pleuronectoidei</taxon>
        <taxon>Pleuronectidae</taxon>
        <taxon>Pleuronectes</taxon>
    </lineage>
</organism>
<feature type="chain" id="PRO_0000051646" description="Cytochrome P450 1A1">
    <location>
        <begin position="1"/>
        <end position="521"/>
    </location>
</feature>
<feature type="binding site" evidence="1">
    <location>
        <position position="229"/>
    </location>
    <ligand>
        <name>substrate</name>
    </ligand>
</feature>
<feature type="binding site" description="axial binding residue" evidence="1">
    <location>
        <position position="463"/>
    </location>
    <ligand>
        <name>heme</name>
        <dbReference type="ChEBI" id="CHEBI:30413"/>
    </ligand>
    <ligandPart>
        <name>Fe</name>
        <dbReference type="ChEBI" id="CHEBI:18248"/>
    </ligandPart>
</feature>
<proteinExistence type="evidence at transcript level"/>
<gene>
    <name type="primary">cyp1a1</name>
</gene>
<keyword id="KW-0256">Endoplasmic reticulum</keyword>
<keyword id="KW-0349">Heme</keyword>
<keyword id="KW-0408">Iron</keyword>
<keyword id="KW-0472">Membrane</keyword>
<keyword id="KW-0479">Metal-binding</keyword>
<keyword id="KW-0492">Microsome</keyword>
<keyword id="KW-0503">Monooxygenase</keyword>
<keyword id="KW-0560">Oxidoreductase</keyword>